<reference key="1">
    <citation type="submission" date="2008-12" db="EMBL/GenBank/DDBJ databases">
        <title>Complete sequence of Chloroflexus aggregans DSM 9485.</title>
        <authorList>
            <consortium name="US DOE Joint Genome Institute"/>
            <person name="Lucas S."/>
            <person name="Copeland A."/>
            <person name="Lapidus A."/>
            <person name="Glavina del Rio T."/>
            <person name="Dalin E."/>
            <person name="Tice H."/>
            <person name="Pitluck S."/>
            <person name="Foster B."/>
            <person name="Larimer F."/>
            <person name="Land M."/>
            <person name="Hauser L."/>
            <person name="Kyrpides N."/>
            <person name="Mikhailova N."/>
            <person name="Bryant D.A."/>
            <person name="Richardson P."/>
        </authorList>
    </citation>
    <scope>NUCLEOTIDE SEQUENCE [LARGE SCALE GENOMIC DNA]</scope>
    <source>
        <strain>MD-66 / DSM 9485</strain>
    </source>
</reference>
<proteinExistence type="inferred from homology"/>
<accession>B8G943</accession>
<sequence length="273" mass="29397">MSLILAIYGKGGIGKSTTSANLSAAMALKGAKVLQIGCDPKHDSTFPLTGHLQPTVIDVLDSVNFHLEDVSKEDVIRTGFAGVDTLESGGPPAGSGCGGYVVGETVKLLKEFGLYDKYDVIVFDVLGDVVCGGFSAPLNYADYGLIIACNDFDSIFAANRLCLAIAQKSQRHKVKLAGIIANRVDYEYGGGTSLLDQFAEKVGTKVIGRVPYHDLIRRSRLAGKTLFEMEGPGKEECTRPFEEMAEYLLAQPQATIPNPYHDRAIFEAIGGWR</sequence>
<organism>
    <name type="scientific">Chloroflexus aggregans (strain MD-66 / DSM 9485)</name>
    <dbReference type="NCBI Taxonomy" id="326427"/>
    <lineage>
        <taxon>Bacteria</taxon>
        <taxon>Bacillati</taxon>
        <taxon>Chloroflexota</taxon>
        <taxon>Chloroflexia</taxon>
        <taxon>Chloroflexales</taxon>
        <taxon>Chloroflexineae</taxon>
        <taxon>Chloroflexaceae</taxon>
        <taxon>Chloroflexus</taxon>
    </lineage>
</organism>
<feature type="chain" id="PRO_1000133435" description="Light-independent protochlorophyllide reductase iron-sulfur ATP-binding protein">
    <location>
        <begin position="1"/>
        <end position="273"/>
    </location>
</feature>
<feature type="binding site" evidence="1">
    <location>
        <begin position="12"/>
        <end position="17"/>
    </location>
    <ligand>
        <name>ATP</name>
        <dbReference type="ChEBI" id="CHEBI:30616"/>
    </ligand>
</feature>
<feature type="binding site" evidence="1">
    <location>
        <position position="16"/>
    </location>
    <ligand>
        <name>Mg(2+)</name>
        <dbReference type="ChEBI" id="CHEBI:18420"/>
    </ligand>
</feature>
<feature type="binding site" evidence="1">
    <location>
        <position position="41"/>
    </location>
    <ligand>
        <name>ATP</name>
        <dbReference type="ChEBI" id="CHEBI:30616"/>
    </ligand>
</feature>
<feature type="binding site" evidence="1">
    <location>
        <position position="97"/>
    </location>
    <ligand>
        <name>[4Fe-4S] cluster</name>
        <dbReference type="ChEBI" id="CHEBI:49883"/>
        <note>ligand shared between dimeric partners</note>
    </ligand>
</feature>
<feature type="binding site" evidence="1">
    <location>
        <position position="131"/>
    </location>
    <ligand>
        <name>[4Fe-4S] cluster</name>
        <dbReference type="ChEBI" id="CHEBI:49883"/>
        <note>ligand shared between dimeric partners</note>
    </ligand>
</feature>
<feature type="binding site" evidence="1">
    <location>
        <begin position="182"/>
        <end position="183"/>
    </location>
    <ligand>
        <name>ATP</name>
        <dbReference type="ChEBI" id="CHEBI:30616"/>
    </ligand>
</feature>
<dbReference type="EC" id="1.3.7.7" evidence="1"/>
<dbReference type="EMBL" id="CP001337">
    <property type="protein sequence ID" value="ACL26318.1"/>
    <property type="molecule type" value="Genomic_DNA"/>
</dbReference>
<dbReference type="RefSeq" id="WP_015942165.1">
    <property type="nucleotide sequence ID" value="NC_011831.1"/>
</dbReference>
<dbReference type="SMR" id="B8G943"/>
<dbReference type="STRING" id="326427.Cagg_3478"/>
<dbReference type="KEGG" id="cag:Cagg_3478"/>
<dbReference type="eggNOG" id="COG1348">
    <property type="taxonomic scope" value="Bacteria"/>
</dbReference>
<dbReference type="HOGENOM" id="CLU_059373_2_0_0"/>
<dbReference type="OrthoDB" id="9778641at2"/>
<dbReference type="UniPathway" id="UPA00671"/>
<dbReference type="Proteomes" id="UP000002508">
    <property type="component" value="Chromosome"/>
</dbReference>
<dbReference type="GO" id="GO:0051539">
    <property type="term" value="F:4 iron, 4 sulfur cluster binding"/>
    <property type="evidence" value="ECO:0007669"/>
    <property type="project" value="UniProtKB-UniRule"/>
</dbReference>
<dbReference type="GO" id="GO:0005524">
    <property type="term" value="F:ATP binding"/>
    <property type="evidence" value="ECO:0007669"/>
    <property type="project" value="UniProtKB-UniRule"/>
</dbReference>
<dbReference type="GO" id="GO:0046872">
    <property type="term" value="F:metal ion binding"/>
    <property type="evidence" value="ECO:0007669"/>
    <property type="project" value="UniProtKB-KW"/>
</dbReference>
<dbReference type="GO" id="GO:0016730">
    <property type="term" value="F:oxidoreductase activity, acting on iron-sulfur proteins as donors"/>
    <property type="evidence" value="ECO:0007669"/>
    <property type="project" value="InterPro"/>
</dbReference>
<dbReference type="GO" id="GO:0016636">
    <property type="term" value="F:oxidoreductase activity, acting on the CH-CH group of donors, iron-sulfur protein as acceptor"/>
    <property type="evidence" value="ECO:0007669"/>
    <property type="project" value="UniProtKB-UniRule"/>
</dbReference>
<dbReference type="GO" id="GO:0036070">
    <property type="term" value="P:light-independent bacteriochlorophyll biosynthetic process"/>
    <property type="evidence" value="ECO:0007669"/>
    <property type="project" value="UniProtKB-UniRule"/>
</dbReference>
<dbReference type="GO" id="GO:0019685">
    <property type="term" value="P:photosynthesis, dark reaction"/>
    <property type="evidence" value="ECO:0007669"/>
    <property type="project" value="InterPro"/>
</dbReference>
<dbReference type="CDD" id="cd02032">
    <property type="entry name" value="Bchl-like"/>
    <property type="match status" value="1"/>
</dbReference>
<dbReference type="Gene3D" id="3.40.50.300">
    <property type="entry name" value="P-loop containing nucleotide triphosphate hydrolases"/>
    <property type="match status" value="1"/>
</dbReference>
<dbReference type="HAMAP" id="MF_00355">
    <property type="entry name" value="ChlL_BchL"/>
    <property type="match status" value="1"/>
</dbReference>
<dbReference type="InterPro" id="IPR030655">
    <property type="entry name" value="NifH/chlL_CS"/>
</dbReference>
<dbReference type="InterPro" id="IPR000392">
    <property type="entry name" value="NifH/frxC"/>
</dbReference>
<dbReference type="InterPro" id="IPR027417">
    <property type="entry name" value="P-loop_NTPase"/>
</dbReference>
<dbReference type="InterPro" id="IPR005971">
    <property type="entry name" value="Protochlorophyllide_ATP-bd"/>
</dbReference>
<dbReference type="NCBIfam" id="TIGR01281">
    <property type="entry name" value="DPOR_bchL"/>
    <property type="match status" value="1"/>
</dbReference>
<dbReference type="PANTHER" id="PTHR42864">
    <property type="entry name" value="LIGHT-INDEPENDENT PROTOCHLOROPHYLLIDE REDUCTASE IRON-SULFUR ATP-BINDING PROTEIN"/>
    <property type="match status" value="1"/>
</dbReference>
<dbReference type="PANTHER" id="PTHR42864:SF2">
    <property type="entry name" value="LIGHT-INDEPENDENT PROTOCHLOROPHYLLIDE REDUCTASE IRON-SULFUR ATP-BINDING PROTEIN"/>
    <property type="match status" value="1"/>
</dbReference>
<dbReference type="Pfam" id="PF00142">
    <property type="entry name" value="Fer4_NifH"/>
    <property type="match status" value="1"/>
</dbReference>
<dbReference type="PIRSF" id="PIRSF000363">
    <property type="entry name" value="Nitrogenase_iron"/>
    <property type="match status" value="1"/>
</dbReference>
<dbReference type="PRINTS" id="PR00091">
    <property type="entry name" value="NITROGNASEII"/>
</dbReference>
<dbReference type="SUPFAM" id="SSF52540">
    <property type="entry name" value="P-loop containing nucleoside triphosphate hydrolases"/>
    <property type="match status" value="1"/>
</dbReference>
<dbReference type="PROSITE" id="PS00746">
    <property type="entry name" value="NIFH_FRXC_1"/>
    <property type="match status" value="1"/>
</dbReference>
<dbReference type="PROSITE" id="PS00692">
    <property type="entry name" value="NIFH_FRXC_2"/>
    <property type="match status" value="1"/>
</dbReference>
<dbReference type="PROSITE" id="PS51026">
    <property type="entry name" value="NIFH_FRXC_3"/>
    <property type="match status" value="1"/>
</dbReference>
<protein>
    <recommendedName>
        <fullName evidence="1">Light-independent protochlorophyllide reductase iron-sulfur ATP-binding protein</fullName>
        <shortName evidence="1">DPOR subunit L</shortName>
        <shortName evidence="1">LI-POR subunit L</shortName>
        <ecNumber evidence="1">1.3.7.7</ecNumber>
    </recommendedName>
</protein>
<gene>
    <name evidence="1" type="primary">bchL</name>
    <name type="ordered locus">Cagg_3478</name>
</gene>
<evidence type="ECO:0000255" key="1">
    <source>
        <dbReference type="HAMAP-Rule" id="MF_00355"/>
    </source>
</evidence>
<name>BCHL_CHLAD</name>
<keyword id="KW-0004">4Fe-4S</keyword>
<keyword id="KW-0067">ATP-binding</keyword>
<keyword id="KW-0077">Bacteriochlorophyll biosynthesis</keyword>
<keyword id="KW-0149">Chlorophyll biosynthesis</keyword>
<keyword id="KW-0408">Iron</keyword>
<keyword id="KW-0411">Iron-sulfur</keyword>
<keyword id="KW-0460">Magnesium</keyword>
<keyword id="KW-0479">Metal-binding</keyword>
<keyword id="KW-0547">Nucleotide-binding</keyword>
<keyword id="KW-0560">Oxidoreductase</keyword>
<keyword id="KW-0602">Photosynthesis</keyword>
<comment type="function">
    <text evidence="1">Component of the dark-operative protochlorophyllide reductase (DPOR) that uses Mg-ATP and reduced ferredoxin to reduce ring D of protochlorophyllide (Pchlide) to form chlorophyllide a (Chlide). This reaction is light-independent. The L component serves as a unique electron donor to the NB-component of the complex, and binds Mg-ATP.</text>
</comment>
<comment type="catalytic activity">
    <reaction evidence="1">
        <text>chlorophyllide a + oxidized 2[4Fe-4S]-[ferredoxin] + 2 ADP + 2 phosphate = protochlorophyllide a + reduced 2[4Fe-4S]-[ferredoxin] + 2 ATP + 2 H2O</text>
        <dbReference type="Rhea" id="RHEA:28202"/>
        <dbReference type="Rhea" id="RHEA-COMP:10002"/>
        <dbReference type="Rhea" id="RHEA-COMP:10004"/>
        <dbReference type="ChEBI" id="CHEBI:15377"/>
        <dbReference type="ChEBI" id="CHEBI:30616"/>
        <dbReference type="ChEBI" id="CHEBI:33722"/>
        <dbReference type="ChEBI" id="CHEBI:33723"/>
        <dbReference type="ChEBI" id="CHEBI:43474"/>
        <dbReference type="ChEBI" id="CHEBI:83348"/>
        <dbReference type="ChEBI" id="CHEBI:83350"/>
        <dbReference type="ChEBI" id="CHEBI:456216"/>
        <dbReference type="EC" id="1.3.7.7"/>
    </reaction>
</comment>
<comment type="cofactor">
    <cofactor evidence="1">
        <name>[4Fe-4S] cluster</name>
        <dbReference type="ChEBI" id="CHEBI:49883"/>
    </cofactor>
    <text evidence="1">Binds 1 [4Fe-4S] cluster per dimer.</text>
</comment>
<comment type="pathway">
    <text evidence="1">Porphyrin-containing compound metabolism; bacteriochlorophyll biosynthesis (light-independent).</text>
</comment>
<comment type="subunit">
    <text evidence="1">Homodimer. Protochlorophyllide reductase is composed of three subunits; BchL, BchN and BchB.</text>
</comment>
<comment type="similarity">
    <text evidence="1">Belongs to the NifH/BchL/ChlL family.</text>
</comment>